<protein>
    <recommendedName>
        <fullName>Outer dynein arm-docking complex subunit 2</fullName>
    </recommendedName>
    <alternativeName>
        <fullName evidence="7">Armadillo repeat-containing protein 4</fullName>
    </alternativeName>
</protein>
<name>ODAD2_BOVIN</name>
<keyword id="KW-0002">3D-structure</keyword>
<keyword id="KW-0966">Cell projection</keyword>
<keyword id="KW-0963">Cytoplasm</keyword>
<keyword id="KW-0206">Cytoskeleton</keyword>
<keyword id="KW-1185">Reference proteome</keyword>
<keyword id="KW-0677">Repeat</keyword>
<comment type="function">
    <text evidence="6">Component of the outer dynein arm-docking complex (ODA-DC) that mediates outer dynein arms (ODA) binding onto the doublet microtubule. Involved in mediating assembly of both ODAs and their axonemal docking complex onto ciliary microtubules.</text>
</comment>
<comment type="subunit">
    <text evidence="1 6">Component of the outer dynein arm-docking complex along with ODAD1, ODAD3, ODAD4 and CLXN. Interacts with CFAP61 (By similarity).</text>
</comment>
<comment type="subcellular location">
    <subcellularLocation>
        <location evidence="6">Cytoplasm</location>
        <location evidence="6">Cytoskeleton</location>
        <location evidence="6">Cilium axoneme</location>
    </subcellularLocation>
    <subcellularLocation>
        <location evidence="2">Cytoplasm</location>
        <location evidence="2">Cytoskeleton</location>
        <location evidence="2">Cilium basal body</location>
    </subcellularLocation>
</comment>
<comment type="tissue specificity">
    <text evidence="6">Expressed in trachea multiciliated cells.</text>
</comment>
<organism evidence="8">
    <name type="scientific">Bos taurus</name>
    <name type="common">Bovine</name>
    <dbReference type="NCBI Taxonomy" id="9913"/>
    <lineage>
        <taxon>Eukaryota</taxon>
        <taxon>Metazoa</taxon>
        <taxon>Chordata</taxon>
        <taxon>Craniata</taxon>
        <taxon>Vertebrata</taxon>
        <taxon>Euteleostomi</taxon>
        <taxon>Mammalia</taxon>
        <taxon>Eutheria</taxon>
        <taxon>Laurasiatheria</taxon>
        <taxon>Artiodactyla</taxon>
        <taxon>Ruminantia</taxon>
        <taxon>Pecora</taxon>
        <taxon>Bovidae</taxon>
        <taxon>Bovinae</taxon>
        <taxon>Bos</taxon>
    </lineage>
</organism>
<proteinExistence type="evidence at protein level"/>
<evidence type="ECO:0000250" key="1">
    <source>
        <dbReference type="UniProtKB" id="B2RY50"/>
    </source>
</evidence>
<evidence type="ECO:0000250" key="2">
    <source>
        <dbReference type="UniProtKB" id="Q5T2S8"/>
    </source>
</evidence>
<evidence type="ECO:0000255" key="3"/>
<evidence type="ECO:0000255" key="4">
    <source>
        <dbReference type="PROSITE-ProRule" id="PRU00259"/>
    </source>
</evidence>
<evidence type="ECO:0000256" key="5">
    <source>
        <dbReference type="SAM" id="MobiDB-lite"/>
    </source>
</evidence>
<evidence type="ECO:0000269" key="6">
    <source>
    </source>
</evidence>
<evidence type="ECO:0000303" key="7">
    <source>
    </source>
</evidence>
<evidence type="ECO:0000312" key="8">
    <source>
        <dbReference type="Proteomes" id="UP000009136"/>
    </source>
</evidence>
<evidence type="ECO:0007744" key="9">
    <source>
        <dbReference type="PDB" id="7RRO"/>
    </source>
</evidence>
<feature type="chain" id="PRO_0000456156" description="Outer dynein arm-docking complex subunit 2">
    <location>
        <begin position="1"/>
        <end position="1044"/>
    </location>
</feature>
<feature type="repeat" description="HEAT 1" evidence="3">
    <location>
        <begin position="448"/>
        <end position="485"/>
    </location>
</feature>
<feature type="repeat" description="ARM 3" evidence="3">
    <location>
        <begin position="484"/>
        <end position="523"/>
    </location>
</feature>
<feature type="repeat" description="HEAT 2" evidence="3">
    <location>
        <begin position="487"/>
        <end position="527"/>
    </location>
</feature>
<feature type="repeat" description="ARM 4" evidence="3">
    <location>
        <begin position="525"/>
        <end position="564"/>
    </location>
</feature>
<feature type="repeat" description="HEAT 3" evidence="3">
    <location>
        <begin position="530"/>
        <end position="568"/>
    </location>
</feature>
<feature type="repeat" description="ARM 1" evidence="4">
    <location>
        <begin position="535"/>
        <end position="577"/>
    </location>
</feature>
<feature type="repeat" description="ARM 5" evidence="3">
    <location>
        <begin position="622"/>
        <end position="661"/>
    </location>
</feature>
<feature type="repeat" description="HEAT 4" evidence="3">
    <location>
        <begin position="627"/>
        <end position="665"/>
    </location>
</feature>
<feature type="repeat" description="ARM 6" evidence="3">
    <location>
        <begin position="663"/>
        <end position="702"/>
    </location>
</feature>
<feature type="repeat" description="HEAT 5" evidence="3">
    <location>
        <begin position="668"/>
        <end position="706"/>
    </location>
</feature>
<feature type="repeat" description="ARM 7" evidence="3">
    <location>
        <begin position="746"/>
        <end position="785"/>
    </location>
</feature>
<feature type="repeat" description="ARM 8" evidence="3">
    <location>
        <begin position="828"/>
        <end position="867"/>
    </location>
</feature>
<feature type="repeat" description="HEAT 6" evidence="3">
    <location>
        <begin position="831"/>
        <end position="870"/>
    </location>
</feature>
<feature type="repeat" description="ARM 9" evidence="3">
    <location>
        <begin position="871"/>
        <end position="910"/>
    </location>
</feature>
<feature type="repeat" description="HEAT 7" evidence="3">
    <location>
        <begin position="874"/>
        <end position="914"/>
    </location>
</feature>
<feature type="repeat" description="ARM 10" evidence="3">
    <location>
        <begin position="912"/>
        <end position="951"/>
    </location>
</feature>
<feature type="repeat" description="HEAT 8" evidence="3">
    <location>
        <begin position="916"/>
        <end position="955"/>
    </location>
</feature>
<feature type="repeat" description="ARM 11" evidence="3">
    <location>
        <begin position="953"/>
        <end position="992"/>
    </location>
</feature>
<feature type="repeat" description="HEAT 9" evidence="3">
    <location>
        <begin position="958"/>
        <end position="996"/>
    </location>
</feature>
<feature type="repeat" description="HEAT 10" evidence="3">
    <location>
        <begin position="999"/>
        <end position="1037"/>
    </location>
</feature>
<feature type="repeat" description="ARM 2" evidence="4">
    <location>
        <begin position="1004"/>
        <end position="1031"/>
    </location>
</feature>
<feature type="region of interest" description="Disordered" evidence="5">
    <location>
        <begin position="317"/>
        <end position="409"/>
    </location>
</feature>
<feature type="region of interest" description="Disordered" evidence="5">
    <location>
        <begin position="423"/>
        <end position="446"/>
    </location>
</feature>
<feature type="compositionally biased region" description="Basic and acidic residues" evidence="5">
    <location>
        <begin position="317"/>
        <end position="338"/>
    </location>
</feature>
<feature type="compositionally biased region" description="Basic and acidic residues" evidence="5">
    <location>
        <begin position="379"/>
        <end position="401"/>
    </location>
</feature>
<gene>
    <name type="primary">ODAD2</name>
    <name evidence="7" type="synonym">ARMC4</name>
</gene>
<sequence length="1044" mass="115859">MGVALTRSAQWTAAGHGAKTLEVTPLNEAIVKEIIMFVESFIYKYPQEANYVFVEPLEWKTNLDPSAFGSGYAVSGTTVKSEEADKNGEPLLYLSVPQIKIRSFGQLSRMLYIAKNMKLKEAQACIEANRNPVAKILGLDYNIISEKIGNSFVSNILDKITKDDDSESEIKMKIALQLKQLDLHLLNHSLKHISLEIRLNPGTVKNDIELLKQFSGKGKQTVLESIEYTSDYEFSNGCRAPPWRQIKGEICYVLVKPHDAETLCVTCSKEGVFLNGGKTDDEGQINYERKGEIYKDLVTLLKEKSAIFSENMSKQEIKFSEQPQKDQPNEAPKEEVAITHKASVTSRKSTQEKNRINLGRSQLTKRLEPSLNWRTSVSSKDRNTLRDTQVEKHGGKLEKSRSSVSPGRAQLIRKSVEKIEEIISDSSSESEEDEEQPDHRQEANADLPSEYWQIQKLVKYLKGGNQTATVIALCSMKDFNLAQETCQLAIRDVGGLEVLINLLETDEVKCKIGSLKILKEISHNPQIRRNIVDLGGLPVMVNILDSPHKSLKCLAAETIANVAKFRRARRVVRRHGGITKLVALLDCGKHSGEPAQSSLYETRDVEVARCGALALWSCSKSYANKEAIRKAGGIPLLARLLKTSHENMLIPVVGTLQECASEENYRAAIKAERIIENLVKNLNSENEQLQEHCAMAIYQCAEDEETRDLVRLHGGLKPLASLLNNTDNKERLAAVTGAIWKCSISKENVTKFREYKAIETLVGLLTDQPEEVLVNVVGALGECCQEHENRVIIRRCGGIQPLVNLLVGINQALLVNVTKAVGACAVEPESMMIIDRLDGVRLLWSLLKNPHPDVKASAAWALCPCIQNAKDAGEMVRSFVGGLELVVNLLKSDNKEVLASVCAVITNIAKDQENLAVITDHGVVPLLSKLANTNNDKLRRHLAETISRCCMWGRNRVAFGEHKAVAPLVRYLKSNDTNVHRATAQALYQLSEDADNCVTMHENGAVKLLLDMVGSPDEELQEAAAGCISNIRRLALAIEKARYS</sequence>
<reference key="1">
    <citation type="journal article" date="2009" name="Genome Biol.">
        <title>A whole-genome assembly of the domestic cow, Bos taurus.</title>
        <authorList>
            <person name="Zimin A.V."/>
            <person name="Delcher A.L."/>
            <person name="Florea L."/>
            <person name="Kelley D.R."/>
            <person name="Schatz M.C."/>
            <person name="Puiu D."/>
            <person name="Hanrahan F."/>
            <person name="Pertea G."/>
            <person name="Van Tassell C.P."/>
            <person name="Sonstegard T.S."/>
            <person name="Marcais G."/>
            <person name="Roberts M."/>
            <person name="Subramanian P."/>
            <person name="Yorke J.A."/>
            <person name="Salzberg S.L."/>
        </authorList>
    </citation>
    <scope>NUCLEOTIDE SEQUENCE [LARGE SCALE GENOMIC DNA]</scope>
    <source>
        <strain>Hereford</strain>
    </source>
</reference>
<reference evidence="9" key="2">
    <citation type="journal article" date="2021" name="Cell">
        <title>De novo identification of mammalian ciliary motility proteins using cryo-EM.</title>
        <authorList>
            <person name="Gui M."/>
            <person name="Farley H."/>
            <person name="Anujan P."/>
            <person name="Anderson J.R."/>
            <person name="Maxwell D.W."/>
            <person name="Whitchurch J.B."/>
            <person name="Botsch J.J."/>
            <person name="Qiu T."/>
            <person name="Meleppattu S."/>
            <person name="Singh S.K."/>
            <person name="Zhang Q."/>
            <person name="Thompson J."/>
            <person name="Lucas J.S."/>
            <person name="Bingle C.D."/>
            <person name="Norris D.P."/>
            <person name="Roy S."/>
            <person name="Brown A."/>
        </authorList>
    </citation>
    <scope>STRUCTURE BY ELECTRON MICROSCOPY (3.40 ANGSTROMS)</scope>
    <scope>SUBUNIT</scope>
    <scope>FUNCTION</scope>
    <scope>SUBCELLULAR LOCATION</scope>
    <scope>TISSUE SPECIFICITY</scope>
</reference>
<accession>E1B8W3</accession>
<dbReference type="RefSeq" id="NP_001179560.1">
    <property type="nucleotide sequence ID" value="NM_001192631.1"/>
</dbReference>
<dbReference type="PDB" id="7RRO">
    <property type="method" value="EM"/>
    <property type="resolution" value="3.40 A"/>
    <property type="chains" value="H7/H8/H9=1-1044"/>
</dbReference>
<dbReference type="PDB" id="9CPB">
    <property type="method" value="EM"/>
    <property type="resolution" value="3.52 A"/>
    <property type="chains" value="1A=1-1044"/>
</dbReference>
<dbReference type="PDBsum" id="7RRO"/>
<dbReference type="PDBsum" id="9CPB"/>
<dbReference type="EMDB" id="EMD-24664"/>
<dbReference type="EMDB" id="EMD-45801"/>
<dbReference type="EMDB" id="EMD-50664"/>
<dbReference type="SMR" id="E1B8W3"/>
<dbReference type="FunCoup" id="E1B8W3">
    <property type="interactions" value="55"/>
</dbReference>
<dbReference type="STRING" id="9913.ENSBTAP00000000861"/>
<dbReference type="PaxDb" id="9913-ENSBTAP00000000861"/>
<dbReference type="GeneID" id="526515"/>
<dbReference type="KEGG" id="bta:526515"/>
<dbReference type="CTD" id="55130"/>
<dbReference type="VEuPathDB" id="HostDB:ENSBTAG00000000654"/>
<dbReference type="eggNOG" id="KOG0167">
    <property type="taxonomic scope" value="Eukaryota"/>
</dbReference>
<dbReference type="HOGENOM" id="CLU_011703_0_0_1"/>
<dbReference type="InParanoid" id="E1B8W3"/>
<dbReference type="OMA" id="HAPPWRQ"/>
<dbReference type="OrthoDB" id="1683831at2759"/>
<dbReference type="TreeFam" id="TF324155"/>
<dbReference type="Proteomes" id="UP000009136">
    <property type="component" value="Chromosome 13"/>
</dbReference>
<dbReference type="Bgee" id="ENSBTAG00000000654">
    <property type="expression patterns" value="Expressed in oviduct epithelium and 61 other cell types or tissues"/>
</dbReference>
<dbReference type="GO" id="GO:0120228">
    <property type="term" value="C:outer dynein arm docking complex"/>
    <property type="evidence" value="ECO:0000250"/>
    <property type="project" value="UniProtKB"/>
</dbReference>
<dbReference type="GO" id="GO:0003341">
    <property type="term" value="P:cilium movement"/>
    <property type="evidence" value="ECO:0000314"/>
    <property type="project" value="UniProtKB"/>
</dbReference>
<dbReference type="GO" id="GO:0036158">
    <property type="term" value="P:outer dynein arm assembly"/>
    <property type="evidence" value="ECO:0000314"/>
    <property type="project" value="UniProtKB"/>
</dbReference>
<dbReference type="FunFam" id="1.25.10.10:FF:000546">
    <property type="entry name" value="Armadillo repeat containing 4"/>
    <property type="match status" value="1"/>
</dbReference>
<dbReference type="FunFam" id="1.25.10.10:FF:000605">
    <property type="entry name" value="Armadillo repeat containing 4"/>
    <property type="match status" value="1"/>
</dbReference>
<dbReference type="FunFam" id="1.25.10.10:FF:000383">
    <property type="entry name" value="armadillo repeat-containing protein 4"/>
    <property type="match status" value="1"/>
</dbReference>
<dbReference type="FunFam" id="1.25.10.10:FF:000351">
    <property type="entry name" value="armadillo repeat-containing protein 4 isoform X1"/>
    <property type="match status" value="1"/>
</dbReference>
<dbReference type="Gene3D" id="1.25.10.10">
    <property type="entry name" value="Leucine-rich Repeat Variant"/>
    <property type="match status" value="4"/>
</dbReference>
<dbReference type="InterPro" id="IPR011989">
    <property type="entry name" value="ARM-like"/>
</dbReference>
<dbReference type="InterPro" id="IPR016024">
    <property type="entry name" value="ARM-type_fold"/>
</dbReference>
<dbReference type="InterPro" id="IPR000225">
    <property type="entry name" value="Armadillo"/>
</dbReference>
<dbReference type="PANTHER" id="PTHR46241">
    <property type="entry name" value="ARMADILLO REPEAT-CONTAINING PROTEIN 4 ARMC4"/>
    <property type="match status" value="1"/>
</dbReference>
<dbReference type="PANTHER" id="PTHR46241:SF1">
    <property type="entry name" value="OUTER DYNEIN ARM-DOCKING COMPLEX SUBUNIT 2"/>
    <property type="match status" value="1"/>
</dbReference>
<dbReference type="Pfam" id="PF00514">
    <property type="entry name" value="Arm"/>
    <property type="match status" value="2"/>
</dbReference>
<dbReference type="SMART" id="SM00185">
    <property type="entry name" value="ARM"/>
    <property type="match status" value="13"/>
</dbReference>
<dbReference type="SUPFAM" id="SSF48371">
    <property type="entry name" value="ARM repeat"/>
    <property type="match status" value="2"/>
</dbReference>
<dbReference type="PROSITE" id="PS50176">
    <property type="entry name" value="ARM_REPEAT"/>
    <property type="match status" value="4"/>
</dbReference>